<sequence length="194" mass="20384">MSTTIDVPESSNVAKGKAVLVAPPRPGGWKKGVAIMDFILRLGAIAAALGAAATMGTSDQTLPFFTQFLQFEASYDSFTSFQFFVITMALVGGYLVLSLPFSFVAIIRPHAAGPRLFLIILDTVFLTLTTASGASAAAIVYLAHNGNQDSNWLAICNQFGDFCAQTSSAVVSSFVAVVVLVLLVVLSALALGKR</sequence>
<name>CASP2_SOYBN</name>
<accession>C6TFL9</accession>
<feature type="chain" id="PRO_0000391517" description="Casparian strip membrane protein 2">
    <location>
        <begin position="1"/>
        <end position="194"/>
    </location>
</feature>
<feature type="topological domain" description="Cytoplasmic" evidence="2">
    <location>
        <begin position="1"/>
        <end position="32"/>
    </location>
</feature>
<feature type="transmembrane region" description="Helical" evidence="2">
    <location>
        <begin position="33"/>
        <end position="53"/>
    </location>
</feature>
<feature type="topological domain" description="Extracellular" evidence="2">
    <location>
        <begin position="54"/>
        <end position="82"/>
    </location>
</feature>
<feature type="transmembrane region" description="Helical" evidence="2">
    <location>
        <begin position="83"/>
        <end position="103"/>
    </location>
</feature>
<feature type="topological domain" description="Cytoplasmic" evidence="2">
    <location>
        <begin position="104"/>
        <end position="115"/>
    </location>
</feature>
<feature type="transmembrane region" description="Helical" evidence="2">
    <location>
        <begin position="116"/>
        <end position="136"/>
    </location>
</feature>
<feature type="topological domain" description="Extracellular" evidence="2">
    <location>
        <begin position="137"/>
        <end position="168"/>
    </location>
</feature>
<feature type="transmembrane region" description="Helical" evidence="2">
    <location>
        <begin position="169"/>
        <end position="189"/>
    </location>
</feature>
<feature type="topological domain" description="Cytoplasmic" evidence="2">
    <location>
        <begin position="190"/>
        <end position="194"/>
    </location>
</feature>
<protein>
    <recommendedName>
        <fullName>Casparian strip membrane protein 2</fullName>
        <shortName>GmCASP2</shortName>
    </recommendedName>
</protein>
<evidence type="ECO:0000250" key="1"/>
<evidence type="ECO:0000255" key="2"/>
<evidence type="ECO:0000305" key="3"/>
<reference key="1">
    <citation type="submission" date="2009-08" db="EMBL/GenBank/DDBJ databases">
        <authorList>
            <person name="Cheung F."/>
            <person name="Xiao Y."/>
            <person name="Chan A."/>
            <person name="Moskal W."/>
            <person name="Town C.D."/>
        </authorList>
    </citation>
    <scope>NUCLEOTIDE SEQUENCE [LARGE SCALE MRNA]</scope>
</reference>
<reference key="2">
    <citation type="journal article" date="2014" name="Plant Physiol.">
        <title>Functional and evolutionary analysis of the CASPARIAN STRIP MEMBRANE DOMAIN PROTEIN family.</title>
        <authorList>
            <person name="Roppolo D."/>
            <person name="Boeckmann B."/>
            <person name="Pfister A."/>
            <person name="Boutet E."/>
            <person name="Rubio M.C."/>
            <person name="Denervaud-Tendon V."/>
            <person name="Vermeer J.E."/>
            <person name="Gheyselinck J."/>
            <person name="Xenarios I."/>
            <person name="Geldner N."/>
        </authorList>
    </citation>
    <scope>GENE FAMILY</scope>
    <scope>NOMENCLATURE</scope>
</reference>
<keyword id="KW-1003">Cell membrane</keyword>
<keyword id="KW-0961">Cell wall biogenesis/degradation</keyword>
<keyword id="KW-0472">Membrane</keyword>
<keyword id="KW-1185">Reference proteome</keyword>
<keyword id="KW-0812">Transmembrane</keyword>
<keyword id="KW-1133">Transmembrane helix</keyword>
<proteinExistence type="evidence at transcript level"/>
<dbReference type="EMBL" id="BT096408">
    <property type="protein sequence ID" value="ACU20621.1"/>
    <property type="molecule type" value="mRNA"/>
</dbReference>
<dbReference type="RefSeq" id="NP_001242417.1">
    <property type="nucleotide sequence ID" value="NM_001255488.1"/>
</dbReference>
<dbReference type="SMR" id="C6TFL9"/>
<dbReference type="FunCoup" id="C6TFL9">
    <property type="interactions" value="571"/>
</dbReference>
<dbReference type="STRING" id="3847.C6TFL9"/>
<dbReference type="PaxDb" id="3847-GLYMA10G08720.1"/>
<dbReference type="GeneID" id="100812678"/>
<dbReference type="KEGG" id="gmx:100812678"/>
<dbReference type="eggNOG" id="ENOG502QZV7">
    <property type="taxonomic scope" value="Eukaryota"/>
</dbReference>
<dbReference type="InParanoid" id="C6TFL9"/>
<dbReference type="OrthoDB" id="753675at2759"/>
<dbReference type="Proteomes" id="UP000008827">
    <property type="component" value="Unplaced"/>
</dbReference>
<dbReference type="GO" id="GO:0048226">
    <property type="term" value="C:Casparian strip"/>
    <property type="evidence" value="ECO:0000318"/>
    <property type="project" value="GO_Central"/>
</dbReference>
<dbReference type="GO" id="GO:0005886">
    <property type="term" value="C:plasma membrane"/>
    <property type="evidence" value="ECO:0000318"/>
    <property type="project" value="GO_Central"/>
</dbReference>
<dbReference type="GO" id="GO:0042545">
    <property type="term" value="P:cell wall modification"/>
    <property type="evidence" value="ECO:0000318"/>
    <property type="project" value="GO_Central"/>
</dbReference>
<dbReference type="GO" id="GO:0007043">
    <property type="term" value="P:cell-cell junction assembly"/>
    <property type="evidence" value="ECO:0000318"/>
    <property type="project" value="GO_Central"/>
</dbReference>
<dbReference type="InterPro" id="IPR006459">
    <property type="entry name" value="CASP/CASPL"/>
</dbReference>
<dbReference type="InterPro" id="IPR006702">
    <property type="entry name" value="CASP_dom"/>
</dbReference>
<dbReference type="InterPro" id="IPR044173">
    <property type="entry name" value="CASPL"/>
</dbReference>
<dbReference type="NCBIfam" id="TIGR01569">
    <property type="entry name" value="A_tha_TIGR01569"/>
    <property type="match status" value="1"/>
</dbReference>
<dbReference type="PANTHER" id="PTHR36488:SF11">
    <property type="entry name" value="CASP-LIKE PROTEIN"/>
    <property type="match status" value="1"/>
</dbReference>
<dbReference type="PANTHER" id="PTHR36488">
    <property type="entry name" value="CASP-LIKE PROTEIN 1U1"/>
    <property type="match status" value="1"/>
</dbReference>
<dbReference type="Pfam" id="PF04535">
    <property type="entry name" value="CASP_dom"/>
    <property type="match status" value="1"/>
</dbReference>
<organism>
    <name type="scientific">Glycine max</name>
    <name type="common">Soybean</name>
    <name type="synonym">Glycine hispida</name>
    <dbReference type="NCBI Taxonomy" id="3847"/>
    <lineage>
        <taxon>Eukaryota</taxon>
        <taxon>Viridiplantae</taxon>
        <taxon>Streptophyta</taxon>
        <taxon>Embryophyta</taxon>
        <taxon>Tracheophyta</taxon>
        <taxon>Spermatophyta</taxon>
        <taxon>Magnoliopsida</taxon>
        <taxon>eudicotyledons</taxon>
        <taxon>Gunneridae</taxon>
        <taxon>Pentapetalae</taxon>
        <taxon>rosids</taxon>
        <taxon>fabids</taxon>
        <taxon>Fabales</taxon>
        <taxon>Fabaceae</taxon>
        <taxon>Papilionoideae</taxon>
        <taxon>50 kb inversion clade</taxon>
        <taxon>NPAAA clade</taxon>
        <taxon>indigoferoid/millettioid clade</taxon>
        <taxon>Phaseoleae</taxon>
        <taxon>Glycine</taxon>
        <taxon>Glycine subgen. Soja</taxon>
    </lineage>
</organism>
<comment type="function">
    <text evidence="1">Regulates membrane-cell wall junctions and localized cell wall deposition. Required for establishment of the Casparian strip membrane domain (CSD) and the subsequent formation of Casparian strips, a cell wall modification of the root endodermis that determines an apoplastic barrier between the intraorganismal apoplasm and the extraorganismal apoplasm and prevents lateral diffusion (By similarity).</text>
</comment>
<comment type="subunit">
    <text evidence="1">Homodimer and heterodimers.</text>
</comment>
<comment type="subcellular location">
    <subcellularLocation>
        <location evidence="1">Cell membrane</location>
        <topology evidence="1">Multi-pass membrane protein</topology>
    </subcellularLocation>
    <text evidence="1">Very restricted localization following a belt shape within the plasma membrane which coincides with the position of the Casparian strip membrane domain in the root endodermis.</text>
</comment>
<comment type="similarity">
    <text evidence="3">Belongs to the Casparian strip membrane proteins (CASP) family.</text>
</comment>